<name>Y2308_BURVG</name>
<dbReference type="EMBL" id="CP000614">
    <property type="protein sequence ID" value="ABO55307.1"/>
    <property type="molecule type" value="Genomic_DNA"/>
</dbReference>
<dbReference type="SMR" id="A4JGA4"/>
<dbReference type="KEGG" id="bvi:Bcep1808_2308"/>
<dbReference type="eggNOG" id="COG3022">
    <property type="taxonomic scope" value="Bacteria"/>
</dbReference>
<dbReference type="HOGENOM" id="CLU_061989_0_0_4"/>
<dbReference type="Proteomes" id="UP000002287">
    <property type="component" value="Chromosome 1"/>
</dbReference>
<dbReference type="GO" id="GO:0005829">
    <property type="term" value="C:cytosol"/>
    <property type="evidence" value="ECO:0007669"/>
    <property type="project" value="TreeGrafter"/>
</dbReference>
<dbReference type="GO" id="GO:0033194">
    <property type="term" value="P:response to hydroperoxide"/>
    <property type="evidence" value="ECO:0007669"/>
    <property type="project" value="TreeGrafter"/>
</dbReference>
<dbReference type="HAMAP" id="MF_00652">
    <property type="entry name" value="UPF0246"/>
    <property type="match status" value="1"/>
</dbReference>
<dbReference type="InterPro" id="IPR005583">
    <property type="entry name" value="YaaA"/>
</dbReference>
<dbReference type="NCBIfam" id="NF002541">
    <property type="entry name" value="PRK02101.1-1"/>
    <property type="match status" value="1"/>
</dbReference>
<dbReference type="NCBIfam" id="NF002542">
    <property type="entry name" value="PRK02101.1-3"/>
    <property type="match status" value="1"/>
</dbReference>
<dbReference type="PANTHER" id="PTHR30283:SF4">
    <property type="entry name" value="PEROXIDE STRESS RESISTANCE PROTEIN YAAA"/>
    <property type="match status" value="1"/>
</dbReference>
<dbReference type="PANTHER" id="PTHR30283">
    <property type="entry name" value="PEROXIDE STRESS RESPONSE PROTEIN YAAA"/>
    <property type="match status" value="1"/>
</dbReference>
<dbReference type="Pfam" id="PF03883">
    <property type="entry name" value="H2O2_YaaD"/>
    <property type="match status" value="1"/>
</dbReference>
<evidence type="ECO:0000255" key="1">
    <source>
        <dbReference type="HAMAP-Rule" id="MF_00652"/>
    </source>
</evidence>
<comment type="similarity">
    <text evidence="1">Belongs to the UPF0246 family.</text>
</comment>
<gene>
    <name type="ordered locus">Bcep1808_2308</name>
</gene>
<protein>
    <recommendedName>
        <fullName evidence="1">UPF0246 protein Bcep1808_2308</fullName>
    </recommendedName>
</protein>
<reference key="1">
    <citation type="submission" date="2007-03" db="EMBL/GenBank/DDBJ databases">
        <title>Complete sequence of chromosome 1 of Burkholderia vietnamiensis G4.</title>
        <authorList>
            <consortium name="US DOE Joint Genome Institute"/>
            <person name="Copeland A."/>
            <person name="Lucas S."/>
            <person name="Lapidus A."/>
            <person name="Barry K."/>
            <person name="Detter J.C."/>
            <person name="Glavina del Rio T."/>
            <person name="Hammon N."/>
            <person name="Israni S."/>
            <person name="Dalin E."/>
            <person name="Tice H."/>
            <person name="Pitluck S."/>
            <person name="Chain P."/>
            <person name="Malfatti S."/>
            <person name="Shin M."/>
            <person name="Vergez L."/>
            <person name="Schmutz J."/>
            <person name="Larimer F."/>
            <person name="Land M."/>
            <person name="Hauser L."/>
            <person name="Kyrpides N."/>
            <person name="Tiedje J."/>
            <person name="Richardson P."/>
        </authorList>
    </citation>
    <scope>NUCLEOTIDE SEQUENCE [LARGE SCALE GENOMIC DNA]</scope>
    <source>
        <strain>G4 / LMG 22486</strain>
    </source>
</reference>
<accession>A4JGA4</accession>
<proteinExistence type="inferred from homology"/>
<organism>
    <name type="scientific">Burkholderia vietnamiensis (strain G4 / LMG 22486)</name>
    <name type="common">Burkholderia cepacia (strain R1808)</name>
    <dbReference type="NCBI Taxonomy" id="269482"/>
    <lineage>
        <taxon>Bacteria</taxon>
        <taxon>Pseudomonadati</taxon>
        <taxon>Pseudomonadota</taxon>
        <taxon>Betaproteobacteria</taxon>
        <taxon>Burkholderiales</taxon>
        <taxon>Burkholderiaceae</taxon>
        <taxon>Burkholderia</taxon>
        <taxon>Burkholderia cepacia complex</taxon>
    </lineage>
</organism>
<sequence>MIIVLSPAKSLDYDTPAHVPSYTQPAFVDDASELIDGLRKLSPQDIATLMDISDPLARLNFQRYADWSPTFTPANAKQAVLAFNGDVYEGFDAKSLSAADLDYAQQHVRVLSGLYGLLRPLDLLQPYRLEMGTRFASARGKDLYAFWGDRITRALNEQLETRSGAARVLINCASTEYFKSVKPKLLAAPVVTPVFEDWKGGRYKIISFHAKRARGLMARYIVENRIAEPAALKDFALEGYAFDAAASNDSTYVYRRRIGE</sequence>
<feature type="chain" id="PRO_1000061594" description="UPF0246 protein Bcep1808_2308">
    <location>
        <begin position="1"/>
        <end position="260"/>
    </location>
</feature>